<proteinExistence type="inferred from homology"/>
<comment type="function">
    <text evidence="1">Catalyzes the biosynthesis of agmatine from arginine.</text>
</comment>
<comment type="catalytic activity">
    <reaction evidence="1">
        <text>L-arginine + H(+) = agmatine + CO2</text>
        <dbReference type="Rhea" id="RHEA:17641"/>
        <dbReference type="ChEBI" id="CHEBI:15378"/>
        <dbReference type="ChEBI" id="CHEBI:16526"/>
        <dbReference type="ChEBI" id="CHEBI:32682"/>
        <dbReference type="ChEBI" id="CHEBI:58145"/>
        <dbReference type="EC" id="4.1.1.19"/>
    </reaction>
</comment>
<comment type="cofactor">
    <cofactor evidence="1">
        <name>Mg(2+)</name>
        <dbReference type="ChEBI" id="CHEBI:18420"/>
    </cofactor>
</comment>
<comment type="cofactor">
    <cofactor evidence="1">
        <name>pyridoxal 5'-phosphate</name>
        <dbReference type="ChEBI" id="CHEBI:597326"/>
    </cofactor>
</comment>
<comment type="pathway">
    <text evidence="1">Amine and polyamine biosynthesis; agmatine biosynthesis; agmatine from L-arginine: step 1/1.</text>
</comment>
<comment type="similarity">
    <text evidence="1">Belongs to the Orn/Lys/Arg decarboxylase class-II family. SpeA subfamily.</text>
</comment>
<evidence type="ECO:0000255" key="1">
    <source>
        <dbReference type="HAMAP-Rule" id="MF_01417"/>
    </source>
</evidence>
<gene>
    <name evidence="1" type="primary">speA</name>
    <name type="ordered locus">Shew185_1761</name>
</gene>
<keyword id="KW-0210">Decarboxylase</keyword>
<keyword id="KW-0456">Lyase</keyword>
<keyword id="KW-0460">Magnesium</keyword>
<keyword id="KW-0479">Metal-binding</keyword>
<keyword id="KW-0620">Polyamine biosynthesis</keyword>
<keyword id="KW-0663">Pyridoxal phosphate</keyword>
<keyword id="KW-0745">Spermidine biosynthesis</keyword>
<name>SPEA_SHEB8</name>
<organism>
    <name type="scientific">Shewanella baltica (strain OS185)</name>
    <dbReference type="NCBI Taxonomy" id="402882"/>
    <lineage>
        <taxon>Bacteria</taxon>
        <taxon>Pseudomonadati</taxon>
        <taxon>Pseudomonadota</taxon>
        <taxon>Gammaproteobacteria</taxon>
        <taxon>Alteromonadales</taxon>
        <taxon>Shewanellaceae</taxon>
        <taxon>Shewanella</taxon>
    </lineage>
</organism>
<reference key="1">
    <citation type="submission" date="2007-07" db="EMBL/GenBank/DDBJ databases">
        <title>Complete sequence of chromosome of Shewanella baltica OS185.</title>
        <authorList>
            <consortium name="US DOE Joint Genome Institute"/>
            <person name="Copeland A."/>
            <person name="Lucas S."/>
            <person name="Lapidus A."/>
            <person name="Barry K."/>
            <person name="Glavina del Rio T."/>
            <person name="Dalin E."/>
            <person name="Tice H."/>
            <person name="Pitluck S."/>
            <person name="Sims D."/>
            <person name="Brettin T."/>
            <person name="Bruce D."/>
            <person name="Detter J.C."/>
            <person name="Han C."/>
            <person name="Schmutz J."/>
            <person name="Larimer F."/>
            <person name="Land M."/>
            <person name="Hauser L."/>
            <person name="Kyrpides N."/>
            <person name="Mikhailova N."/>
            <person name="Brettar I."/>
            <person name="Rodrigues J."/>
            <person name="Konstantinidis K."/>
            <person name="Tiedje J."/>
            <person name="Richardson P."/>
        </authorList>
    </citation>
    <scope>NUCLEOTIDE SEQUENCE [LARGE SCALE GENOMIC DNA]</scope>
    <source>
        <strain>OS185</strain>
    </source>
</reference>
<feature type="chain" id="PRO_1000024266" description="Biosynthetic arginine decarboxylase">
    <location>
        <begin position="1"/>
        <end position="637"/>
    </location>
</feature>
<feature type="binding site" evidence="1">
    <location>
        <begin position="286"/>
        <end position="296"/>
    </location>
    <ligand>
        <name>substrate</name>
    </ligand>
</feature>
<feature type="modified residue" description="N6-(pyridoxal phosphate)lysine" evidence="1">
    <location>
        <position position="101"/>
    </location>
</feature>
<dbReference type="EC" id="4.1.1.19" evidence="1"/>
<dbReference type="EMBL" id="CP000753">
    <property type="protein sequence ID" value="ABS07904.1"/>
    <property type="molecule type" value="Genomic_DNA"/>
</dbReference>
<dbReference type="RefSeq" id="WP_006081274.1">
    <property type="nucleotide sequence ID" value="NC_009665.1"/>
</dbReference>
<dbReference type="SMR" id="A6WM65"/>
<dbReference type="KEGG" id="sbm:Shew185_1761"/>
<dbReference type="HOGENOM" id="CLU_027243_1_0_6"/>
<dbReference type="UniPathway" id="UPA00186">
    <property type="reaction ID" value="UER00284"/>
</dbReference>
<dbReference type="GO" id="GO:0008792">
    <property type="term" value="F:arginine decarboxylase activity"/>
    <property type="evidence" value="ECO:0007669"/>
    <property type="project" value="UniProtKB-UniRule"/>
</dbReference>
<dbReference type="GO" id="GO:0046872">
    <property type="term" value="F:metal ion binding"/>
    <property type="evidence" value="ECO:0007669"/>
    <property type="project" value="UniProtKB-KW"/>
</dbReference>
<dbReference type="GO" id="GO:0006527">
    <property type="term" value="P:arginine catabolic process"/>
    <property type="evidence" value="ECO:0007669"/>
    <property type="project" value="InterPro"/>
</dbReference>
<dbReference type="GO" id="GO:0033388">
    <property type="term" value="P:putrescine biosynthetic process from arginine"/>
    <property type="evidence" value="ECO:0007669"/>
    <property type="project" value="TreeGrafter"/>
</dbReference>
<dbReference type="GO" id="GO:0008295">
    <property type="term" value="P:spermidine biosynthetic process"/>
    <property type="evidence" value="ECO:0007669"/>
    <property type="project" value="UniProtKB-UniRule"/>
</dbReference>
<dbReference type="CDD" id="cd06830">
    <property type="entry name" value="PLPDE_III_ADC"/>
    <property type="match status" value="1"/>
</dbReference>
<dbReference type="FunFam" id="1.10.287.3440:FF:000001">
    <property type="entry name" value="Biosynthetic arginine decarboxylase"/>
    <property type="match status" value="1"/>
</dbReference>
<dbReference type="FunFam" id="1.20.58.930:FF:000001">
    <property type="entry name" value="Biosynthetic arginine decarboxylase"/>
    <property type="match status" value="1"/>
</dbReference>
<dbReference type="FunFam" id="2.40.37.10:FF:000001">
    <property type="entry name" value="Biosynthetic arginine decarboxylase"/>
    <property type="match status" value="1"/>
</dbReference>
<dbReference type="FunFam" id="3.20.20.10:FF:000001">
    <property type="entry name" value="Biosynthetic arginine decarboxylase"/>
    <property type="match status" value="1"/>
</dbReference>
<dbReference type="Gene3D" id="1.10.287.3440">
    <property type="match status" value="1"/>
</dbReference>
<dbReference type="Gene3D" id="1.20.58.930">
    <property type="match status" value="1"/>
</dbReference>
<dbReference type="Gene3D" id="3.20.20.10">
    <property type="entry name" value="Alanine racemase"/>
    <property type="match status" value="1"/>
</dbReference>
<dbReference type="Gene3D" id="2.40.37.10">
    <property type="entry name" value="Lyase, Ornithine Decarboxylase, Chain A, domain 1"/>
    <property type="match status" value="1"/>
</dbReference>
<dbReference type="HAMAP" id="MF_01417">
    <property type="entry name" value="SpeA"/>
    <property type="match status" value="1"/>
</dbReference>
<dbReference type="InterPro" id="IPR009006">
    <property type="entry name" value="Ala_racemase/Decarboxylase_C"/>
</dbReference>
<dbReference type="InterPro" id="IPR040634">
    <property type="entry name" value="Arg_decarb_HB"/>
</dbReference>
<dbReference type="InterPro" id="IPR041128">
    <property type="entry name" value="Arg_decarbox_C"/>
</dbReference>
<dbReference type="InterPro" id="IPR002985">
    <property type="entry name" value="Arg_decrbxlase"/>
</dbReference>
<dbReference type="InterPro" id="IPR022644">
    <property type="entry name" value="De-COase2_N"/>
</dbReference>
<dbReference type="InterPro" id="IPR000183">
    <property type="entry name" value="Orn/DAP/Arg_de-COase"/>
</dbReference>
<dbReference type="InterPro" id="IPR029066">
    <property type="entry name" value="PLP-binding_barrel"/>
</dbReference>
<dbReference type="NCBIfam" id="NF003763">
    <property type="entry name" value="PRK05354.1"/>
    <property type="match status" value="1"/>
</dbReference>
<dbReference type="NCBIfam" id="TIGR01273">
    <property type="entry name" value="speA"/>
    <property type="match status" value="1"/>
</dbReference>
<dbReference type="PANTHER" id="PTHR43295">
    <property type="entry name" value="ARGININE DECARBOXYLASE"/>
    <property type="match status" value="1"/>
</dbReference>
<dbReference type="PANTHER" id="PTHR43295:SF9">
    <property type="entry name" value="BIOSYNTHETIC ARGININE DECARBOXYLASE"/>
    <property type="match status" value="1"/>
</dbReference>
<dbReference type="Pfam" id="PF17810">
    <property type="entry name" value="Arg_decarb_HB"/>
    <property type="match status" value="1"/>
</dbReference>
<dbReference type="Pfam" id="PF17944">
    <property type="entry name" value="Arg_decarbox_C"/>
    <property type="match status" value="1"/>
</dbReference>
<dbReference type="Pfam" id="PF02784">
    <property type="entry name" value="Orn_Arg_deC_N"/>
    <property type="match status" value="1"/>
</dbReference>
<dbReference type="PIRSF" id="PIRSF001336">
    <property type="entry name" value="Arg_decrbxlase"/>
    <property type="match status" value="1"/>
</dbReference>
<dbReference type="PRINTS" id="PR01180">
    <property type="entry name" value="ARGDCRBXLASE"/>
</dbReference>
<dbReference type="PRINTS" id="PR01179">
    <property type="entry name" value="ODADCRBXLASE"/>
</dbReference>
<dbReference type="SUPFAM" id="SSF51419">
    <property type="entry name" value="PLP-binding barrel"/>
    <property type="match status" value="1"/>
</dbReference>
<sequence length="637" mass="70894">MNDWSIDDARAGYNVTHWSQGFYGISDHGEVTVSPDPKNPDYKIGLNELAKDMVKAGVALPVLVRFPQILHHRVNSLCQAFDQAIQKYEYQADYLLVYPIKVNQQQTVVEEILASQASKEVPQLGLEAGSKPELMAVLAMAQKASSVIVCNGYKDNEYIRLALIGEKLGHKVYIVLEKLSELKMVLAESKRLGVTPRLGLRARLAFQGKGKWQASGGEKSKFGLSAAQILLVVEQLKQNDMLDSLQLLHFHLGSQIANIRDIRQGVSEAGRFYCELRALGASVNCFDVGGGLAVDYDGTRSQSNNSMNYGLTEYANNIVNVLTDICNEYEQPMPRIISESGRYLTAHHAVLITDVIGTEAYQPEDIQPPAEESPQLLHNMWHSWSELSGRADQRALIEIYHDSQSDLQEAHSLFALGQLSLAERAWAEQANLRVCHEVQGLLSAKNRYHRPIIDELNEKLADKFFVNFSLFQSLPDAWGIDQVFPVLPLSGLDKAPERRAVMLDITCDSDGIVDQYVDGQGIETTLPVPAWSADSPYLIGFFLVGAYQEILGDMHNLFGDTNSAVVRIEDNGVTNIESVLAGDTVADVLRYVNLDAVAFMRTYEELVNLHIAEDERAQILEELQVGLKGYTYLEDFS</sequence>
<protein>
    <recommendedName>
        <fullName evidence="1">Biosynthetic arginine decarboxylase</fullName>
        <shortName evidence="1">ADC</shortName>
        <ecNumber evidence="1">4.1.1.19</ecNumber>
    </recommendedName>
</protein>
<accession>A6WM65</accession>